<sequence length="357" mass="37534">MDLYGVLKPLFRFMTPEQAHHLSIRVLKSGLVPDLSGGPDDPVLATRVWGLDFPNPVGLAAGFDKHCEVADALFRFGFGFVEAGTVTPRPQPGNPLPRLFRLDEDEAVINRFGFNSEGLAPFVFRLGQRRASGKHGIVGANVGKNKESEDALEDYGAGVSATCRLADYLVCNISSPNTPGLRALQARAEMETLLAHVISVRNASMPDPAARTPLLVKVAPDLDDAALADVAEASLATGVDGIIMGNTTLSRPASLQSKFKDETGGLSGKPLLALSTERLGALYRLVGGRLPIIGVGGIASGADAYAKVRAGASLVQIYSALVFHGPGLVTRIKTDLAARLKADGFASIADAVGVDVR</sequence>
<accession>A7IBC2</accession>
<feature type="chain" id="PRO_1000100297" description="Dihydroorotate dehydrogenase (quinone)">
    <location>
        <begin position="1"/>
        <end position="357"/>
    </location>
</feature>
<feature type="active site" description="Nucleophile" evidence="1">
    <location>
        <position position="175"/>
    </location>
</feature>
<feature type="binding site" evidence="1">
    <location>
        <begin position="61"/>
        <end position="65"/>
    </location>
    <ligand>
        <name>FMN</name>
        <dbReference type="ChEBI" id="CHEBI:58210"/>
    </ligand>
</feature>
<feature type="binding site" evidence="1">
    <location>
        <position position="65"/>
    </location>
    <ligand>
        <name>substrate</name>
    </ligand>
</feature>
<feature type="binding site" evidence="1">
    <location>
        <position position="85"/>
    </location>
    <ligand>
        <name>FMN</name>
        <dbReference type="ChEBI" id="CHEBI:58210"/>
    </ligand>
</feature>
<feature type="binding site" evidence="1">
    <location>
        <begin position="110"/>
        <end position="114"/>
    </location>
    <ligand>
        <name>substrate</name>
    </ligand>
</feature>
<feature type="binding site" evidence="1">
    <location>
        <position position="141"/>
    </location>
    <ligand>
        <name>FMN</name>
        <dbReference type="ChEBI" id="CHEBI:58210"/>
    </ligand>
</feature>
<feature type="binding site" evidence="1">
    <location>
        <position position="172"/>
    </location>
    <ligand>
        <name>FMN</name>
        <dbReference type="ChEBI" id="CHEBI:58210"/>
    </ligand>
</feature>
<feature type="binding site" evidence="1">
    <location>
        <position position="172"/>
    </location>
    <ligand>
        <name>substrate</name>
    </ligand>
</feature>
<feature type="binding site" evidence="1">
    <location>
        <position position="177"/>
    </location>
    <ligand>
        <name>substrate</name>
    </ligand>
</feature>
<feature type="binding site" evidence="1">
    <location>
        <position position="217"/>
    </location>
    <ligand>
        <name>FMN</name>
        <dbReference type="ChEBI" id="CHEBI:58210"/>
    </ligand>
</feature>
<feature type="binding site" evidence="1">
    <location>
        <position position="245"/>
    </location>
    <ligand>
        <name>FMN</name>
        <dbReference type="ChEBI" id="CHEBI:58210"/>
    </ligand>
</feature>
<feature type="binding site" evidence="1">
    <location>
        <begin position="246"/>
        <end position="247"/>
    </location>
    <ligand>
        <name>substrate</name>
    </ligand>
</feature>
<feature type="binding site" evidence="1">
    <location>
        <position position="268"/>
    </location>
    <ligand>
        <name>FMN</name>
        <dbReference type="ChEBI" id="CHEBI:58210"/>
    </ligand>
</feature>
<feature type="binding site" evidence="1">
    <location>
        <position position="297"/>
    </location>
    <ligand>
        <name>FMN</name>
        <dbReference type="ChEBI" id="CHEBI:58210"/>
    </ligand>
</feature>
<feature type="binding site" evidence="1">
    <location>
        <begin position="318"/>
        <end position="319"/>
    </location>
    <ligand>
        <name>FMN</name>
        <dbReference type="ChEBI" id="CHEBI:58210"/>
    </ligand>
</feature>
<evidence type="ECO:0000255" key="1">
    <source>
        <dbReference type="HAMAP-Rule" id="MF_00225"/>
    </source>
</evidence>
<reference key="1">
    <citation type="submission" date="2007-07" db="EMBL/GenBank/DDBJ databases">
        <title>Complete sequence of chromosome of Xanthobacter autotrophicus Py2.</title>
        <authorList>
            <consortium name="US DOE Joint Genome Institute"/>
            <person name="Copeland A."/>
            <person name="Lucas S."/>
            <person name="Lapidus A."/>
            <person name="Barry K."/>
            <person name="Glavina del Rio T."/>
            <person name="Hammon N."/>
            <person name="Israni S."/>
            <person name="Dalin E."/>
            <person name="Tice H."/>
            <person name="Pitluck S."/>
            <person name="Sims D."/>
            <person name="Brettin T."/>
            <person name="Bruce D."/>
            <person name="Detter J.C."/>
            <person name="Han C."/>
            <person name="Tapia R."/>
            <person name="Brainard J."/>
            <person name="Schmutz J."/>
            <person name="Larimer F."/>
            <person name="Land M."/>
            <person name="Hauser L."/>
            <person name="Kyrpides N."/>
            <person name="Kim E."/>
            <person name="Ensigns S.A."/>
            <person name="Richardson P."/>
        </authorList>
    </citation>
    <scope>NUCLEOTIDE SEQUENCE [LARGE SCALE GENOMIC DNA]</scope>
    <source>
        <strain>ATCC BAA-1158 / Py2</strain>
    </source>
</reference>
<dbReference type="EC" id="1.3.5.2" evidence="1"/>
<dbReference type="EMBL" id="CP000781">
    <property type="protein sequence ID" value="ABS65315.1"/>
    <property type="molecule type" value="Genomic_DNA"/>
</dbReference>
<dbReference type="SMR" id="A7IBC2"/>
<dbReference type="STRING" id="78245.Xaut_0056"/>
<dbReference type="KEGG" id="xau:Xaut_0056"/>
<dbReference type="eggNOG" id="COG0167">
    <property type="taxonomic scope" value="Bacteria"/>
</dbReference>
<dbReference type="HOGENOM" id="CLU_013640_2_1_5"/>
<dbReference type="OrthoDB" id="9802377at2"/>
<dbReference type="PhylomeDB" id="A7IBC2"/>
<dbReference type="UniPathway" id="UPA00070">
    <property type="reaction ID" value="UER00946"/>
</dbReference>
<dbReference type="Proteomes" id="UP000002417">
    <property type="component" value="Chromosome"/>
</dbReference>
<dbReference type="GO" id="GO:0005737">
    <property type="term" value="C:cytoplasm"/>
    <property type="evidence" value="ECO:0007669"/>
    <property type="project" value="InterPro"/>
</dbReference>
<dbReference type="GO" id="GO:0005886">
    <property type="term" value="C:plasma membrane"/>
    <property type="evidence" value="ECO:0007669"/>
    <property type="project" value="UniProtKB-SubCell"/>
</dbReference>
<dbReference type="GO" id="GO:0106430">
    <property type="term" value="F:dihydroorotate dehydrogenase (quinone) activity"/>
    <property type="evidence" value="ECO:0007669"/>
    <property type="project" value="UniProtKB-EC"/>
</dbReference>
<dbReference type="GO" id="GO:0006207">
    <property type="term" value="P:'de novo' pyrimidine nucleobase biosynthetic process"/>
    <property type="evidence" value="ECO:0007669"/>
    <property type="project" value="InterPro"/>
</dbReference>
<dbReference type="GO" id="GO:0044205">
    <property type="term" value="P:'de novo' UMP biosynthetic process"/>
    <property type="evidence" value="ECO:0007669"/>
    <property type="project" value="UniProtKB-UniRule"/>
</dbReference>
<dbReference type="CDD" id="cd04738">
    <property type="entry name" value="DHOD_2_like"/>
    <property type="match status" value="1"/>
</dbReference>
<dbReference type="Gene3D" id="3.20.20.70">
    <property type="entry name" value="Aldolase class I"/>
    <property type="match status" value="1"/>
</dbReference>
<dbReference type="HAMAP" id="MF_00225">
    <property type="entry name" value="DHO_dh_type2"/>
    <property type="match status" value="1"/>
</dbReference>
<dbReference type="InterPro" id="IPR013785">
    <property type="entry name" value="Aldolase_TIM"/>
</dbReference>
<dbReference type="InterPro" id="IPR050074">
    <property type="entry name" value="DHO_dehydrogenase"/>
</dbReference>
<dbReference type="InterPro" id="IPR005719">
    <property type="entry name" value="Dihydroorotate_DH_2"/>
</dbReference>
<dbReference type="InterPro" id="IPR005720">
    <property type="entry name" value="Dihydroorotate_DH_cat"/>
</dbReference>
<dbReference type="InterPro" id="IPR001295">
    <property type="entry name" value="Dihydroorotate_DH_CS"/>
</dbReference>
<dbReference type="NCBIfam" id="NF003645">
    <property type="entry name" value="PRK05286.1-2"/>
    <property type="match status" value="1"/>
</dbReference>
<dbReference type="NCBIfam" id="NF003652">
    <property type="entry name" value="PRK05286.2-5"/>
    <property type="match status" value="1"/>
</dbReference>
<dbReference type="NCBIfam" id="TIGR01036">
    <property type="entry name" value="pyrD_sub2"/>
    <property type="match status" value="1"/>
</dbReference>
<dbReference type="PANTHER" id="PTHR48109:SF4">
    <property type="entry name" value="DIHYDROOROTATE DEHYDROGENASE (QUINONE), MITOCHONDRIAL"/>
    <property type="match status" value="1"/>
</dbReference>
<dbReference type="PANTHER" id="PTHR48109">
    <property type="entry name" value="DIHYDROOROTATE DEHYDROGENASE (QUINONE), MITOCHONDRIAL-RELATED"/>
    <property type="match status" value="1"/>
</dbReference>
<dbReference type="Pfam" id="PF01180">
    <property type="entry name" value="DHO_dh"/>
    <property type="match status" value="1"/>
</dbReference>
<dbReference type="SUPFAM" id="SSF51395">
    <property type="entry name" value="FMN-linked oxidoreductases"/>
    <property type="match status" value="1"/>
</dbReference>
<dbReference type="PROSITE" id="PS00911">
    <property type="entry name" value="DHODEHASE_1"/>
    <property type="match status" value="1"/>
</dbReference>
<dbReference type="PROSITE" id="PS00912">
    <property type="entry name" value="DHODEHASE_2"/>
    <property type="match status" value="1"/>
</dbReference>
<protein>
    <recommendedName>
        <fullName evidence="1">Dihydroorotate dehydrogenase (quinone)</fullName>
        <ecNumber evidence="1">1.3.5.2</ecNumber>
    </recommendedName>
    <alternativeName>
        <fullName evidence="1">DHOdehase</fullName>
        <shortName evidence="1">DHOD</shortName>
        <shortName evidence="1">DHODase</shortName>
    </alternativeName>
    <alternativeName>
        <fullName evidence="1">Dihydroorotate oxidase</fullName>
    </alternativeName>
</protein>
<organism>
    <name type="scientific">Xanthobacter autotrophicus (strain ATCC BAA-1158 / Py2)</name>
    <dbReference type="NCBI Taxonomy" id="78245"/>
    <lineage>
        <taxon>Bacteria</taxon>
        <taxon>Pseudomonadati</taxon>
        <taxon>Pseudomonadota</taxon>
        <taxon>Alphaproteobacteria</taxon>
        <taxon>Hyphomicrobiales</taxon>
        <taxon>Xanthobacteraceae</taxon>
        <taxon>Xanthobacter</taxon>
    </lineage>
</organism>
<keyword id="KW-1003">Cell membrane</keyword>
<keyword id="KW-0285">Flavoprotein</keyword>
<keyword id="KW-0288">FMN</keyword>
<keyword id="KW-0472">Membrane</keyword>
<keyword id="KW-0560">Oxidoreductase</keyword>
<keyword id="KW-0665">Pyrimidine biosynthesis</keyword>
<keyword id="KW-1185">Reference proteome</keyword>
<comment type="function">
    <text evidence="1">Catalyzes the conversion of dihydroorotate to orotate with quinone as electron acceptor.</text>
</comment>
<comment type="catalytic activity">
    <reaction evidence="1">
        <text>(S)-dihydroorotate + a quinone = orotate + a quinol</text>
        <dbReference type="Rhea" id="RHEA:30187"/>
        <dbReference type="ChEBI" id="CHEBI:24646"/>
        <dbReference type="ChEBI" id="CHEBI:30839"/>
        <dbReference type="ChEBI" id="CHEBI:30864"/>
        <dbReference type="ChEBI" id="CHEBI:132124"/>
        <dbReference type="EC" id="1.3.5.2"/>
    </reaction>
</comment>
<comment type="cofactor">
    <cofactor evidence="1">
        <name>FMN</name>
        <dbReference type="ChEBI" id="CHEBI:58210"/>
    </cofactor>
    <text evidence="1">Binds 1 FMN per subunit.</text>
</comment>
<comment type="pathway">
    <text evidence="1">Pyrimidine metabolism; UMP biosynthesis via de novo pathway; orotate from (S)-dihydroorotate (quinone route): step 1/1.</text>
</comment>
<comment type="subunit">
    <text evidence="1">Monomer.</text>
</comment>
<comment type="subcellular location">
    <subcellularLocation>
        <location evidence="1">Cell membrane</location>
        <topology evidence="1">Peripheral membrane protein</topology>
    </subcellularLocation>
</comment>
<comment type="similarity">
    <text evidence="1">Belongs to the dihydroorotate dehydrogenase family. Type 2 subfamily.</text>
</comment>
<proteinExistence type="inferred from homology"/>
<gene>
    <name evidence="1" type="primary">pyrD</name>
    <name type="ordered locus">Xaut_0056</name>
</gene>
<name>PYRD_XANP2</name>